<organism>
    <name type="scientific">Staphylococcus aureus (strain N315)</name>
    <dbReference type="NCBI Taxonomy" id="158879"/>
    <lineage>
        <taxon>Bacteria</taxon>
        <taxon>Bacillati</taxon>
        <taxon>Bacillota</taxon>
        <taxon>Bacilli</taxon>
        <taxon>Bacillales</taxon>
        <taxon>Staphylococcaceae</taxon>
        <taxon>Staphylococcus</taxon>
    </lineage>
</organism>
<dbReference type="EMBL" id="BA000018">
    <property type="protein sequence ID" value="BAB42665.1"/>
    <property type="molecule type" value="Genomic_DNA"/>
</dbReference>
<dbReference type="PIR" id="D89938">
    <property type="entry name" value="D89938"/>
</dbReference>
<dbReference type="RefSeq" id="WP_000492108.1">
    <property type="nucleotide sequence ID" value="NC_002745.2"/>
</dbReference>
<dbReference type="EMDB" id="EMD-17217"/>
<dbReference type="EMDB" id="EMD-17222"/>
<dbReference type="EMDB" id="EMD-17231"/>
<dbReference type="EMDB" id="EMD-17233"/>
<dbReference type="SMR" id="Q7A5C5"/>
<dbReference type="EnsemblBacteria" id="BAB42665">
    <property type="protein sequence ID" value="BAB42665"/>
    <property type="gene ID" value="BAB42665"/>
</dbReference>
<dbReference type="KEGG" id="sau:SA1402"/>
<dbReference type="HOGENOM" id="CLU_836378_0_0_9"/>
<dbReference type="GO" id="GO:0045121">
    <property type="term" value="C:membrane raft"/>
    <property type="evidence" value="ECO:0007669"/>
    <property type="project" value="UniProtKB-SubCell"/>
</dbReference>
<dbReference type="GO" id="GO:0005886">
    <property type="term" value="C:plasma membrane"/>
    <property type="evidence" value="ECO:0007669"/>
    <property type="project" value="UniProtKB-SubCell"/>
</dbReference>
<dbReference type="HAMAP" id="MF_01562">
    <property type="entry name" value="FloA"/>
    <property type="match status" value="1"/>
</dbReference>
<dbReference type="InterPro" id="IPR022853">
    <property type="entry name" value="FloA"/>
</dbReference>
<dbReference type="NCBIfam" id="NF010186">
    <property type="entry name" value="PRK13665.1"/>
    <property type="match status" value="1"/>
</dbReference>
<dbReference type="Pfam" id="PF12127">
    <property type="entry name" value="FloA"/>
    <property type="match status" value="1"/>
</dbReference>
<comment type="function">
    <text evidence="1">Found in functional membrane microdomains (FMM) that may be equivalent to eukaryotic membrane rafts. FMMs are highly dynamic and increase in number as cells age. Flotillins are thought to be important factors in membrane fluidity.</text>
</comment>
<comment type="subunit">
    <text evidence="1">Homooligomerizes.</text>
</comment>
<comment type="subcellular location">
    <subcellularLocation>
        <location evidence="1 2">Cell membrane</location>
        <topology evidence="1">Multi-pass membrane protein</topology>
    </subcellularLocation>
    <subcellularLocation>
        <location evidence="1 2">Membrane raft</location>
        <topology evidence="1">Multi-pass membrane protein</topology>
    </subcellularLocation>
    <text evidence="2">Present in detergent-resistant membrane (DRM) fractions that may be equivalent to eukaryotic membrane rafts, with 1 focus per cell; lost when cells are treated with squalene synthase inhibitor zaragozic acid. These rafts include proteins involved in signaling, molecule trafficking and protein secretion.</text>
</comment>
<comment type="similarity">
    <text evidence="1">Belongs to the flotillin-like FloA family.</text>
</comment>
<protein>
    <recommendedName>
        <fullName evidence="1">Flotillin-like protein FloA</fullName>
    </recommendedName>
</protein>
<sequence>MFSLSFIVIAVIIIVALLILFSFVPIGLWISALAAGVHVGIGTLVGMRLRRVSPRKVIAPLIKAHKAGLALTTNQLESHYLAGGNVDRVVDANIAAQRADIDLPFERAAAIDLAGRDVLEAVQMSVNPKVIETPFIAGVAMNGIEVKAKARITVRANIARLVGGAGEETIIARVGEGIVSTIGSSKHHTEVLENPDNISKTVLSKGLDSGTAFEILSIDIADVDISKNIGADLQTEQALADKNIAQAKAEERRAMAVATEQEMKARVQEMHAKVVEAESEVPLAMAEALRSGNISVKDYYNLKNIEADTGMRNAINKRTDQSDDESPEH</sequence>
<name>FLOA_STAAN</name>
<feature type="chain" id="PRO_0000232565" description="Flotillin-like protein FloA">
    <location>
        <begin position="1"/>
        <end position="329"/>
    </location>
</feature>
<feature type="transmembrane region" description="Helical" evidence="1">
    <location>
        <begin position="6"/>
        <end position="26"/>
    </location>
</feature>
<feature type="transmembrane region" description="Helical" evidence="1">
    <location>
        <begin position="27"/>
        <end position="47"/>
    </location>
</feature>
<accession>Q7A5C5</accession>
<gene>
    <name evidence="1 3" type="primary">floA</name>
    <name type="ordered locus">SA1402</name>
</gene>
<keyword id="KW-1003">Cell membrane</keyword>
<keyword id="KW-0472">Membrane</keyword>
<keyword id="KW-0812">Transmembrane</keyword>
<keyword id="KW-1133">Transmembrane helix</keyword>
<proteinExistence type="evidence at protein level"/>
<evidence type="ECO:0000255" key="1">
    <source>
        <dbReference type="HAMAP-Rule" id="MF_01562"/>
    </source>
</evidence>
<evidence type="ECO:0000269" key="2">
    <source>
    </source>
</evidence>
<evidence type="ECO:0000303" key="3">
    <source>
    </source>
</evidence>
<reference key="1">
    <citation type="journal article" date="2001" name="Lancet">
        <title>Whole genome sequencing of meticillin-resistant Staphylococcus aureus.</title>
        <authorList>
            <person name="Kuroda M."/>
            <person name="Ohta T."/>
            <person name="Uchiyama I."/>
            <person name="Baba T."/>
            <person name="Yuzawa H."/>
            <person name="Kobayashi I."/>
            <person name="Cui L."/>
            <person name="Oguchi A."/>
            <person name="Aoki K."/>
            <person name="Nagai Y."/>
            <person name="Lian J.-Q."/>
            <person name="Ito T."/>
            <person name="Kanamori M."/>
            <person name="Matsumaru H."/>
            <person name="Maruyama A."/>
            <person name="Murakami H."/>
            <person name="Hosoyama A."/>
            <person name="Mizutani-Ui Y."/>
            <person name="Takahashi N.K."/>
            <person name="Sawano T."/>
            <person name="Inoue R."/>
            <person name="Kaito C."/>
            <person name="Sekimizu K."/>
            <person name="Hirakawa H."/>
            <person name="Kuhara S."/>
            <person name="Goto S."/>
            <person name="Yabuzaki J."/>
            <person name="Kanehisa M."/>
            <person name="Yamashita A."/>
            <person name="Oshima K."/>
            <person name="Furuya K."/>
            <person name="Yoshino C."/>
            <person name="Shiba T."/>
            <person name="Hattori M."/>
            <person name="Ogasawara N."/>
            <person name="Hayashi H."/>
            <person name="Hiramatsu K."/>
        </authorList>
    </citation>
    <scope>NUCLEOTIDE SEQUENCE [LARGE SCALE GENOMIC DNA]</scope>
    <source>
        <strain>N315</strain>
    </source>
</reference>
<reference key="2">
    <citation type="submission" date="2007-10" db="UniProtKB">
        <title>Shotgun proteomic analysis of total and membrane protein extracts of S. aureus strain N315.</title>
        <authorList>
            <person name="Vaezzadeh A.R."/>
            <person name="Deshusses J."/>
            <person name="Lescuyer P."/>
            <person name="Hochstrasser D.F."/>
        </authorList>
    </citation>
    <scope>IDENTIFICATION BY MASS SPECTROMETRY [LARGE SCALE ANALYSIS]</scope>
    <source>
        <strain>N315</strain>
    </source>
</reference>
<reference key="3">
    <citation type="journal article" date="2010" name="Genes Dev.">
        <title>Functional microdomains in bacterial membranes.</title>
        <authorList>
            <person name="Lopez D."/>
            <person name="Kolter R."/>
        </authorList>
    </citation>
    <scope>IDENTIFICATION BY MASS SPECTROMETRY</scope>
    <scope>SUBCELLULAR LOCATION</scope>
</reference>